<sequence>MSSYANHQALAGLTLGKSTDYRDTYDASLLQGVPRSLNRDPRGLKADNLPFHGTDIWTLYELSWLNAKGLPQVAVGHVELDYTSVNLIESKSFKLYLNSFNQTRFNNWDEVRQTLERDLSTCAQGKVSVALYRLDELEGQPIGHFNGTCIDDQDITIDNYEFTTDYLENATSGEKVVEETLVSHLLKSNCLITHQPDWGSIQIQYRGRQIDREKLLRYLVSFRHHNEFHEQCVERIFNDLLRFCQPEKLSVYARYTRRGGLDINPWRSNSDFVPSTTRLVRQ</sequence>
<name>QUEF_ECOUT</name>
<accession>Q1R7P8</accession>
<keyword id="KW-0963">Cytoplasm</keyword>
<keyword id="KW-0521">NADP</keyword>
<keyword id="KW-0560">Oxidoreductase</keyword>
<keyword id="KW-0671">Queuosine biosynthesis</keyword>
<comment type="function">
    <text evidence="1">Catalyzes the NADPH-dependent reduction of 7-cyano-7-deazaguanine (preQ0) to 7-aminomethyl-7-deazaguanine (preQ1).</text>
</comment>
<comment type="catalytic activity">
    <reaction evidence="1">
        <text>7-aminomethyl-7-carbaguanine + 2 NADP(+) = 7-cyano-7-deazaguanine + 2 NADPH + 3 H(+)</text>
        <dbReference type="Rhea" id="RHEA:13409"/>
        <dbReference type="ChEBI" id="CHEBI:15378"/>
        <dbReference type="ChEBI" id="CHEBI:45075"/>
        <dbReference type="ChEBI" id="CHEBI:57783"/>
        <dbReference type="ChEBI" id="CHEBI:58349"/>
        <dbReference type="ChEBI" id="CHEBI:58703"/>
        <dbReference type="EC" id="1.7.1.13"/>
    </reaction>
</comment>
<comment type="pathway">
    <text evidence="1">tRNA modification; tRNA-queuosine biosynthesis.</text>
</comment>
<comment type="subunit">
    <text evidence="1">Homodimer.</text>
</comment>
<comment type="subcellular location">
    <subcellularLocation>
        <location evidence="1">Cytoplasm</location>
    </subcellularLocation>
</comment>
<comment type="similarity">
    <text evidence="1">Belongs to the GTP cyclohydrolase I family. QueF type 2 subfamily.</text>
</comment>
<reference key="1">
    <citation type="journal article" date="2006" name="Proc. Natl. Acad. Sci. U.S.A.">
        <title>Identification of genes subject to positive selection in uropathogenic strains of Escherichia coli: a comparative genomics approach.</title>
        <authorList>
            <person name="Chen S.L."/>
            <person name="Hung C.-S."/>
            <person name="Xu J."/>
            <person name="Reigstad C.S."/>
            <person name="Magrini V."/>
            <person name="Sabo A."/>
            <person name="Blasiar D."/>
            <person name="Bieri T."/>
            <person name="Meyer R.R."/>
            <person name="Ozersky P."/>
            <person name="Armstrong J.R."/>
            <person name="Fulton R.S."/>
            <person name="Latreille J.P."/>
            <person name="Spieth J."/>
            <person name="Hooton T.M."/>
            <person name="Mardis E.R."/>
            <person name="Hultgren S.J."/>
            <person name="Gordon J.I."/>
        </authorList>
    </citation>
    <scope>NUCLEOTIDE SEQUENCE [LARGE SCALE GENOMIC DNA]</scope>
    <source>
        <strain>UTI89 / UPEC</strain>
    </source>
</reference>
<dbReference type="EC" id="1.7.1.13" evidence="1"/>
<dbReference type="EMBL" id="CP000243">
    <property type="protein sequence ID" value="ABE08616.1"/>
    <property type="molecule type" value="Genomic_DNA"/>
</dbReference>
<dbReference type="RefSeq" id="WP_000100438.1">
    <property type="nucleotide sequence ID" value="NZ_CP064825.1"/>
</dbReference>
<dbReference type="SMR" id="Q1R7P8"/>
<dbReference type="KEGG" id="eci:UTI89_C3164"/>
<dbReference type="HOGENOM" id="CLU_054738_0_0_6"/>
<dbReference type="UniPathway" id="UPA00392"/>
<dbReference type="Proteomes" id="UP000001952">
    <property type="component" value="Chromosome"/>
</dbReference>
<dbReference type="GO" id="GO:0005737">
    <property type="term" value="C:cytoplasm"/>
    <property type="evidence" value="ECO:0007669"/>
    <property type="project" value="UniProtKB-SubCell"/>
</dbReference>
<dbReference type="GO" id="GO:0033739">
    <property type="term" value="F:preQ1 synthase activity"/>
    <property type="evidence" value="ECO:0007669"/>
    <property type="project" value="UniProtKB-UniRule"/>
</dbReference>
<dbReference type="GO" id="GO:0008616">
    <property type="term" value="P:queuosine biosynthetic process"/>
    <property type="evidence" value="ECO:0007669"/>
    <property type="project" value="UniProtKB-UniRule"/>
</dbReference>
<dbReference type="GO" id="GO:0006400">
    <property type="term" value="P:tRNA modification"/>
    <property type="evidence" value="ECO:0007669"/>
    <property type="project" value="UniProtKB-UniRule"/>
</dbReference>
<dbReference type="FunFam" id="3.30.1130.10:FF:000004">
    <property type="entry name" value="NADPH-dependent 7-cyano-7-deazaguanine reductase"/>
    <property type="match status" value="1"/>
</dbReference>
<dbReference type="FunFam" id="3.30.1130.10:FF:000006">
    <property type="entry name" value="NADPH-dependent 7-cyano-7-deazaguanine reductase"/>
    <property type="match status" value="1"/>
</dbReference>
<dbReference type="Gene3D" id="3.30.1130.10">
    <property type="match status" value="2"/>
</dbReference>
<dbReference type="HAMAP" id="MF_00817">
    <property type="entry name" value="QueF_type2"/>
    <property type="match status" value="1"/>
</dbReference>
<dbReference type="InterPro" id="IPR043133">
    <property type="entry name" value="GTP-CH-I_C/QueF"/>
</dbReference>
<dbReference type="InterPro" id="IPR050084">
    <property type="entry name" value="NADPH_dep_7-cyano-7-deazaG_red"/>
</dbReference>
<dbReference type="InterPro" id="IPR029500">
    <property type="entry name" value="QueF"/>
</dbReference>
<dbReference type="InterPro" id="IPR029139">
    <property type="entry name" value="QueF_N"/>
</dbReference>
<dbReference type="InterPro" id="IPR016428">
    <property type="entry name" value="QueF_type2"/>
</dbReference>
<dbReference type="NCBIfam" id="TIGR03138">
    <property type="entry name" value="QueF"/>
    <property type="match status" value="1"/>
</dbReference>
<dbReference type="PANTHER" id="PTHR34354">
    <property type="entry name" value="NADPH-DEPENDENT 7-CYANO-7-DEAZAGUANINE REDUCTASE"/>
    <property type="match status" value="1"/>
</dbReference>
<dbReference type="PANTHER" id="PTHR34354:SF1">
    <property type="entry name" value="NADPH-DEPENDENT 7-CYANO-7-DEAZAGUANINE REDUCTASE"/>
    <property type="match status" value="1"/>
</dbReference>
<dbReference type="Pfam" id="PF14489">
    <property type="entry name" value="QueF"/>
    <property type="match status" value="1"/>
</dbReference>
<dbReference type="Pfam" id="PF14819">
    <property type="entry name" value="QueF_N"/>
    <property type="match status" value="1"/>
</dbReference>
<dbReference type="PIRSF" id="PIRSF004750">
    <property type="entry name" value="Nitrile_oxidored_YqcD_prd"/>
    <property type="match status" value="1"/>
</dbReference>
<dbReference type="SUPFAM" id="SSF55620">
    <property type="entry name" value="Tetrahydrobiopterin biosynthesis enzymes-like"/>
    <property type="match status" value="1"/>
</dbReference>
<evidence type="ECO:0000255" key="1">
    <source>
        <dbReference type="HAMAP-Rule" id="MF_00817"/>
    </source>
</evidence>
<feature type="chain" id="PRO_0000247709" description="NADPH-dependent 7-cyano-7-deazaguanine reductase">
    <location>
        <begin position="1"/>
        <end position="282"/>
    </location>
</feature>
<feature type="active site" description="Thioimide intermediate" evidence="1">
    <location>
        <position position="190"/>
    </location>
</feature>
<feature type="active site" description="Proton donor" evidence="1">
    <location>
        <position position="197"/>
    </location>
</feature>
<feature type="binding site" evidence="1">
    <location>
        <begin position="88"/>
        <end position="90"/>
    </location>
    <ligand>
        <name>substrate</name>
    </ligand>
</feature>
<feature type="binding site" evidence="1">
    <location>
        <begin position="90"/>
        <end position="91"/>
    </location>
    <ligand>
        <name>NADPH</name>
        <dbReference type="ChEBI" id="CHEBI:57783"/>
    </ligand>
</feature>
<feature type="binding site" evidence="1">
    <location>
        <begin position="229"/>
        <end position="230"/>
    </location>
    <ligand>
        <name>substrate</name>
    </ligand>
</feature>
<feature type="binding site" evidence="1">
    <location>
        <begin position="258"/>
        <end position="259"/>
    </location>
    <ligand>
        <name>NADPH</name>
        <dbReference type="ChEBI" id="CHEBI:57783"/>
    </ligand>
</feature>
<gene>
    <name evidence="1" type="primary">queF</name>
    <name type="ordered locus">UTI89_C3164</name>
</gene>
<organism>
    <name type="scientific">Escherichia coli (strain UTI89 / UPEC)</name>
    <dbReference type="NCBI Taxonomy" id="364106"/>
    <lineage>
        <taxon>Bacteria</taxon>
        <taxon>Pseudomonadati</taxon>
        <taxon>Pseudomonadota</taxon>
        <taxon>Gammaproteobacteria</taxon>
        <taxon>Enterobacterales</taxon>
        <taxon>Enterobacteriaceae</taxon>
        <taxon>Escherichia</taxon>
    </lineage>
</organism>
<proteinExistence type="inferred from homology"/>
<protein>
    <recommendedName>
        <fullName evidence="1">NADPH-dependent 7-cyano-7-deazaguanine reductase</fullName>
        <ecNumber evidence="1">1.7.1.13</ecNumber>
    </recommendedName>
    <alternativeName>
        <fullName evidence="1">7-cyano-7-carbaguanine reductase</fullName>
    </alternativeName>
    <alternativeName>
        <fullName evidence="1">NADPH-dependent nitrile oxidoreductase</fullName>
    </alternativeName>
    <alternativeName>
        <fullName evidence="1">PreQ(0) reductase</fullName>
    </alternativeName>
</protein>